<keyword id="KW-0175">Coiled coil</keyword>
<keyword id="KW-1185">Reference proteome</keyword>
<keyword id="KW-0770">Synapse</keyword>
<name>INSY1_BOVIN</name>
<feature type="chain" id="PRO_0000337044" description="Inhibitory synaptic factor 1">
    <location>
        <begin position="1"/>
        <end position="292"/>
    </location>
</feature>
<feature type="region of interest" description="Disordered" evidence="4">
    <location>
        <begin position="1"/>
        <end position="25"/>
    </location>
</feature>
<feature type="region of interest" description="Disordered" evidence="4">
    <location>
        <begin position="122"/>
        <end position="186"/>
    </location>
</feature>
<feature type="region of interest" description="Disordered" evidence="4">
    <location>
        <begin position="198"/>
        <end position="292"/>
    </location>
</feature>
<feature type="coiled-coil region" evidence="3">
    <location>
        <begin position="23"/>
        <end position="63"/>
    </location>
</feature>
<feature type="compositionally biased region" description="Acidic residues" evidence="4">
    <location>
        <begin position="198"/>
        <end position="214"/>
    </location>
</feature>
<feature type="compositionally biased region" description="Polar residues" evidence="4">
    <location>
        <begin position="263"/>
        <end position="285"/>
    </location>
</feature>
<accession>A7YWL5</accession>
<evidence type="ECO:0000250" key="1">
    <source>
        <dbReference type="UniProtKB" id="Q2T9L4"/>
    </source>
</evidence>
<evidence type="ECO:0000250" key="2">
    <source>
        <dbReference type="UniProtKB" id="Q8CD60"/>
    </source>
</evidence>
<evidence type="ECO:0000255" key="3"/>
<evidence type="ECO:0000256" key="4">
    <source>
        <dbReference type="SAM" id="MobiDB-lite"/>
    </source>
</evidence>
<evidence type="ECO:0000305" key="5"/>
<dbReference type="EMBL" id="BC134648">
    <property type="protein sequence ID" value="AAI34649.1"/>
    <property type="molecule type" value="mRNA"/>
</dbReference>
<dbReference type="RefSeq" id="NP_001098902.1">
    <property type="nucleotide sequence ID" value="NM_001105432.1"/>
</dbReference>
<dbReference type="SMR" id="A7YWL5"/>
<dbReference type="FunCoup" id="A7YWL5">
    <property type="interactions" value="625"/>
</dbReference>
<dbReference type="STRING" id="9913.ENSBTAP00000036346"/>
<dbReference type="PaxDb" id="9913-ENSBTAP00000036346"/>
<dbReference type="GeneID" id="613490"/>
<dbReference type="KEGG" id="bta:613490"/>
<dbReference type="CTD" id="388135"/>
<dbReference type="eggNOG" id="ENOG502R2SS">
    <property type="taxonomic scope" value="Eukaryota"/>
</dbReference>
<dbReference type="InParanoid" id="A7YWL5"/>
<dbReference type="OrthoDB" id="9946710at2759"/>
<dbReference type="Proteomes" id="UP000009136">
    <property type="component" value="Unplaced"/>
</dbReference>
<dbReference type="GO" id="GO:0014069">
    <property type="term" value="C:postsynaptic density"/>
    <property type="evidence" value="ECO:0000250"/>
    <property type="project" value="UniProtKB"/>
</dbReference>
<dbReference type="GO" id="GO:0060080">
    <property type="term" value="P:inhibitory postsynaptic potential"/>
    <property type="evidence" value="ECO:0000250"/>
    <property type="project" value="UniProtKB"/>
</dbReference>
<dbReference type="InterPro" id="IPR027997">
    <property type="entry name" value="Largen/INSYN1"/>
</dbReference>
<dbReference type="PANTHER" id="PTHR15917">
    <property type="match status" value="1"/>
</dbReference>
<dbReference type="PANTHER" id="PTHR15917:SF3">
    <property type="entry name" value="INHIBITORY SYNAPTIC FACTOR 1"/>
    <property type="match status" value="1"/>
</dbReference>
<dbReference type="Pfam" id="PF15252">
    <property type="entry name" value="DUF4589"/>
    <property type="match status" value="1"/>
</dbReference>
<reference key="1">
    <citation type="submission" date="2007-03" db="EMBL/GenBank/DDBJ databases">
        <authorList>
            <consortium name="NIH - Mammalian Gene Collection (MGC) project"/>
        </authorList>
    </citation>
    <scope>NUCLEOTIDE SEQUENCE [LARGE SCALE MRNA]</scope>
    <source>
        <strain>Hereford</strain>
        <tissue>Brain cortex</tissue>
    </source>
</reference>
<organism>
    <name type="scientific">Bos taurus</name>
    <name type="common">Bovine</name>
    <dbReference type="NCBI Taxonomy" id="9913"/>
    <lineage>
        <taxon>Eukaryota</taxon>
        <taxon>Metazoa</taxon>
        <taxon>Chordata</taxon>
        <taxon>Craniata</taxon>
        <taxon>Vertebrata</taxon>
        <taxon>Euteleostomi</taxon>
        <taxon>Mammalia</taxon>
        <taxon>Eutheria</taxon>
        <taxon>Laurasiatheria</taxon>
        <taxon>Artiodactyla</taxon>
        <taxon>Ruminantia</taxon>
        <taxon>Pecora</taxon>
        <taxon>Bovidae</taxon>
        <taxon>Bovinae</taxon>
        <taxon>Bos</taxon>
    </lineage>
</organism>
<proteinExistence type="evidence at transcript level"/>
<sequence>MNIRGTPDLGQPSDDPSSGGERERIRQRMKMVIGQLEDILRELKEVAKELREVVSQIDKLTSDFDFELEPDDWTTATVSSTSSSDKAGVGGPFDLGHLDFMTADILSDSWEFCSFLDISTPSDSVDCPESTRPGAGPDYQLMNGGLPVPNGPRVETPDSSSEEAFSAGPVKGQLPQRTPGTRERVRFSDKVLYHALCCDDEEGDGEEEAAEEEGGLSPEPAHTEAPAGPLKPSPAPYKPRRSPLTGRRSGPTSVPEQTRRVTRNSSTQTVSDKSTQTVLPYTATRQKAKGKN</sequence>
<comment type="function">
    <text evidence="2">Component of the protein machinery at the inhibitory synapses, probably acting as a scaffold. Inhibitory synapses dampen neuronal activity through postsynaptic hyperpolarization. This synaptic inhibition is fundamental for the functioning of the central nervous system, shaping and orchestrating the flow of information through neuronal networks to generate a precise neural code.</text>
</comment>
<comment type="subunit">
    <text evidence="2">Interacts with GPHN.</text>
</comment>
<comment type="subcellular location">
    <subcellularLocation>
        <location evidence="2">Postsynaptic density</location>
    </subcellularLocation>
</comment>
<comment type="similarity">
    <text evidence="5">Belongs to the INSYN1 family.</text>
</comment>
<gene>
    <name evidence="1" type="primary">INSYN1</name>
</gene>
<protein>
    <recommendedName>
        <fullName evidence="5">Inhibitory synaptic factor 1</fullName>
        <shortName evidence="2">InSyn1</shortName>
    </recommendedName>
</protein>